<comment type="function">
    <text evidence="1">GTPase that plays an essential role in the late steps of ribosome biogenesis.</text>
</comment>
<comment type="subunit">
    <text evidence="1">Associates with the 50S ribosomal subunit.</text>
</comment>
<comment type="similarity">
    <text evidence="1">Belongs to the TRAFAC class TrmE-Era-EngA-EngB-Septin-like GTPase superfamily. EngA (Der) GTPase family.</text>
</comment>
<organism>
    <name type="scientific">Thermosipho melanesiensis (strain DSM 12029 / CIP 104789 / BI429)</name>
    <dbReference type="NCBI Taxonomy" id="391009"/>
    <lineage>
        <taxon>Bacteria</taxon>
        <taxon>Thermotogati</taxon>
        <taxon>Thermotogota</taxon>
        <taxon>Thermotogae</taxon>
        <taxon>Thermotogales</taxon>
        <taxon>Fervidobacteriaceae</taxon>
        <taxon>Thermosipho</taxon>
    </lineage>
</organism>
<evidence type="ECO:0000255" key="1">
    <source>
        <dbReference type="HAMAP-Rule" id="MF_00195"/>
    </source>
</evidence>
<keyword id="KW-0342">GTP-binding</keyword>
<keyword id="KW-0547">Nucleotide-binding</keyword>
<keyword id="KW-0677">Repeat</keyword>
<keyword id="KW-0690">Ribosome biogenesis</keyword>
<reference key="1">
    <citation type="submission" date="2007-05" db="EMBL/GenBank/DDBJ databases">
        <title>Complete sequence of Thermosipho melanesiensis BI429.</title>
        <authorList>
            <consortium name="US DOE Joint Genome Institute"/>
            <person name="Copeland A."/>
            <person name="Lucas S."/>
            <person name="Lapidus A."/>
            <person name="Barry K."/>
            <person name="Glavina del Rio T."/>
            <person name="Dalin E."/>
            <person name="Tice H."/>
            <person name="Pitluck S."/>
            <person name="Chertkov O."/>
            <person name="Brettin T."/>
            <person name="Bruce D."/>
            <person name="Detter J.C."/>
            <person name="Han C."/>
            <person name="Schmutz J."/>
            <person name="Larimer F."/>
            <person name="Land M."/>
            <person name="Hauser L."/>
            <person name="Kyrpides N."/>
            <person name="Mikhailova N."/>
            <person name="Nelson K."/>
            <person name="Gogarten J.P."/>
            <person name="Noll K."/>
            <person name="Richardson P."/>
        </authorList>
    </citation>
    <scope>NUCLEOTIDE SEQUENCE [LARGE SCALE GENOMIC DNA]</scope>
    <source>
        <strain>DSM 12029 / CIP 104789 / BI429</strain>
    </source>
</reference>
<proteinExistence type="inferred from homology"/>
<dbReference type="EMBL" id="CP000716">
    <property type="protein sequence ID" value="ABR31468.1"/>
    <property type="molecule type" value="Genomic_DNA"/>
</dbReference>
<dbReference type="RefSeq" id="WP_012057827.1">
    <property type="nucleotide sequence ID" value="NC_009616.1"/>
</dbReference>
<dbReference type="SMR" id="A6LNG7"/>
<dbReference type="STRING" id="391009.Tmel_1624"/>
<dbReference type="KEGG" id="tme:Tmel_1624"/>
<dbReference type="eggNOG" id="COG1160">
    <property type="taxonomic scope" value="Bacteria"/>
</dbReference>
<dbReference type="HOGENOM" id="CLU_016077_6_2_0"/>
<dbReference type="OrthoDB" id="9805918at2"/>
<dbReference type="Proteomes" id="UP000001110">
    <property type="component" value="Chromosome"/>
</dbReference>
<dbReference type="GO" id="GO:0005525">
    <property type="term" value="F:GTP binding"/>
    <property type="evidence" value="ECO:0007669"/>
    <property type="project" value="UniProtKB-UniRule"/>
</dbReference>
<dbReference type="GO" id="GO:0043022">
    <property type="term" value="F:ribosome binding"/>
    <property type="evidence" value="ECO:0007669"/>
    <property type="project" value="TreeGrafter"/>
</dbReference>
<dbReference type="GO" id="GO:0042254">
    <property type="term" value="P:ribosome biogenesis"/>
    <property type="evidence" value="ECO:0007669"/>
    <property type="project" value="UniProtKB-KW"/>
</dbReference>
<dbReference type="CDD" id="cd01894">
    <property type="entry name" value="EngA1"/>
    <property type="match status" value="1"/>
</dbReference>
<dbReference type="CDD" id="cd01895">
    <property type="entry name" value="EngA2"/>
    <property type="match status" value="1"/>
</dbReference>
<dbReference type="FunFam" id="3.40.50.300:FF:000040">
    <property type="entry name" value="GTPase Der"/>
    <property type="match status" value="1"/>
</dbReference>
<dbReference type="Gene3D" id="3.30.300.20">
    <property type="match status" value="1"/>
</dbReference>
<dbReference type="Gene3D" id="3.40.50.300">
    <property type="entry name" value="P-loop containing nucleotide triphosphate hydrolases"/>
    <property type="match status" value="2"/>
</dbReference>
<dbReference type="HAMAP" id="MF_00195">
    <property type="entry name" value="GTPase_Der"/>
    <property type="match status" value="1"/>
</dbReference>
<dbReference type="InterPro" id="IPR031166">
    <property type="entry name" value="G_ENGA"/>
</dbReference>
<dbReference type="InterPro" id="IPR006073">
    <property type="entry name" value="GTP-bd"/>
</dbReference>
<dbReference type="InterPro" id="IPR016484">
    <property type="entry name" value="GTPase_Der"/>
</dbReference>
<dbReference type="InterPro" id="IPR032859">
    <property type="entry name" value="KH_dom-like"/>
</dbReference>
<dbReference type="InterPro" id="IPR015946">
    <property type="entry name" value="KH_dom-like_a/b"/>
</dbReference>
<dbReference type="InterPro" id="IPR027417">
    <property type="entry name" value="P-loop_NTPase"/>
</dbReference>
<dbReference type="InterPro" id="IPR005225">
    <property type="entry name" value="Small_GTP-bd"/>
</dbReference>
<dbReference type="NCBIfam" id="TIGR03594">
    <property type="entry name" value="GTPase_EngA"/>
    <property type="match status" value="1"/>
</dbReference>
<dbReference type="NCBIfam" id="TIGR00231">
    <property type="entry name" value="small_GTP"/>
    <property type="match status" value="2"/>
</dbReference>
<dbReference type="PANTHER" id="PTHR43834">
    <property type="entry name" value="GTPASE DER"/>
    <property type="match status" value="1"/>
</dbReference>
<dbReference type="PANTHER" id="PTHR43834:SF6">
    <property type="entry name" value="GTPASE DER"/>
    <property type="match status" value="1"/>
</dbReference>
<dbReference type="Pfam" id="PF14714">
    <property type="entry name" value="KH_dom-like"/>
    <property type="match status" value="1"/>
</dbReference>
<dbReference type="Pfam" id="PF01926">
    <property type="entry name" value="MMR_HSR1"/>
    <property type="match status" value="2"/>
</dbReference>
<dbReference type="PIRSF" id="PIRSF006485">
    <property type="entry name" value="GTP-binding_EngA"/>
    <property type="match status" value="1"/>
</dbReference>
<dbReference type="PRINTS" id="PR00326">
    <property type="entry name" value="GTP1OBG"/>
</dbReference>
<dbReference type="SUPFAM" id="SSF52540">
    <property type="entry name" value="P-loop containing nucleoside triphosphate hydrolases"/>
    <property type="match status" value="2"/>
</dbReference>
<dbReference type="PROSITE" id="PS51712">
    <property type="entry name" value="G_ENGA"/>
    <property type="match status" value="2"/>
</dbReference>
<name>DER_THEM4</name>
<accession>A6LNG7</accession>
<gene>
    <name evidence="1" type="primary">der</name>
    <name type="synonym">engA</name>
    <name type="ordered locus">Tmel_1624</name>
</gene>
<protein>
    <recommendedName>
        <fullName evidence="1">GTPase Der</fullName>
    </recommendedName>
    <alternativeName>
        <fullName evidence="1">GTP-binding protein EngA</fullName>
    </alternativeName>
</protein>
<sequence>MATVLIVGKSNVGKSTLFNKLIGKKKSIVDNKEGVTRDAVSDRVSYFGKSFKLIDTCGIFERPEDIISERLKNLTLNMLSEGDIIIFVVDGKYGLTSEDYHLADLLRKSNSDVILVVNKSENEKKVFVNFDDFYSLGFGEPLFISAEQGKNIDRLIEEVIKRLEKKGLKLEEEEEKDSIIRVALIGRPNAGKSTLFNGILERERALVTPIPGTTRDAIDELVEINGKKYLFIDTAGLRRKSKVEYKSIDMYSNVRSIKSIELSDVVVFVIDSLEGITHQDQKIAGIAENRGKATVVVFNKIDLVKNFKYRKQEFIEHFMERLYFVSYSPVVFVSAQERYGIGKLIKAIKEAYNSLFYRVQTSAVNAVIQRMIMFSPPPRGLKIYYGAQVDVKPPTFLFFTNGKKVPEFYQNNIRKIIRENIYHFTGAPIFLKFKNRH</sequence>
<feature type="chain" id="PRO_1000011774" description="GTPase Der">
    <location>
        <begin position="1"/>
        <end position="437"/>
    </location>
</feature>
<feature type="domain" description="EngA-type G 1">
    <location>
        <begin position="2"/>
        <end position="167"/>
    </location>
</feature>
<feature type="domain" description="EngA-type G 2">
    <location>
        <begin position="180"/>
        <end position="356"/>
    </location>
</feature>
<feature type="domain" description="KH-like" evidence="1">
    <location>
        <begin position="357"/>
        <end position="437"/>
    </location>
</feature>
<feature type="binding site" evidence="1">
    <location>
        <begin position="8"/>
        <end position="15"/>
    </location>
    <ligand>
        <name>GTP</name>
        <dbReference type="ChEBI" id="CHEBI:37565"/>
        <label>1</label>
    </ligand>
</feature>
<feature type="binding site" evidence="1">
    <location>
        <begin position="55"/>
        <end position="59"/>
    </location>
    <ligand>
        <name>GTP</name>
        <dbReference type="ChEBI" id="CHEBI:37565"/>
        <label>1</label>
    </ligand>
</feature>
<feature type="binding site" evidence="1">
    <location>
        <begin position="118"/>
        <end position="121"/>
    </location>
    <ligand>
        <name>GTP</name>
        <dbReference type="ChEBI" id="CHEBI:37565"/>
        <label>1</label>
    </ligand>
</feature>
<feature type="binding site" evidence="1">
    <location>
        <begin position="186"/>
        <end position="193"/>
    </location>
    <ligand>
        <name>GTP</name>
        <dbReference type="ChEBI" id="CHEBI:37565"/>
        <label>2</label>
    </ligand>
</feature>
<feature type="binding site" evidence="1">
    <location>
        <begin position="233"/>
        <end position="237"/>
    </location>
    <ligand>
        <name>GTP</name>
        <dbReference type="ChEBI" id="CHEBI:37565"/>
        <label>2</label>
    </ligand>
</feature>
<feature type="binding site" evidence="1">
    <location>
        <begin position="299"/>
        <end position="302"/>
    </location>
    <ligand>
        <name>GTP</name>
        <dbReference type="ChEBI" id="CHEBI:37565"/>
        <label>2</label>
    </ligand>
</feature>